<sequence>MTEKKYIVALDQGTTSSRAVVMDHDANIISVSQREFEQIYPKPGWVEHDPMEIWATQSSTLVEVLAKADISSDQIAAIGITNQRETTIVWEKETGKPIYNAIVWQCRRTAEICEHLKRDGLEDYIRSNTGLVIDPYFSGTKVKWILDHVEGSRERARRGELLFGTVDTWLIWKMTQGRVHVTDYTNASRTMLFNIHTLDWDDKMLEVLDIPREMLPEVRRSSEVYGQTNIGGKGGTRIPISGIAGDQQAALFGQLCVKEGMAKNTYGTGCFMLMNTGEKAVKSENGLLTTIACGPTGEVNYALEGAVFMAGASIQWLRDEMKLINDAYDSEYFATKVQNTNGVYVVPAFTGLGAPYWDPYARGAIFGLTRGVNANHIIRATLESIAYQTRDVLEAMQADSGIRLHALRVDGGAVANNFLMQFQSDILGTRVERPEVREVTALGAAYLAGLAVGFWQNLDELQEKAVIEREFRPGIETTERNYRYAGWKKAVKRAMAWEEHDE</sequence>
<keyword id="KW-0021">Allosteric enzyme</keyword>
<keyword id="KW-0067">ATP-binding</keyword>
<keyword id="KW-0319">Glycerol metabolism</keyword>
<keyword id="KW-0418">Kinase</keyword>
<keyword id="KW-0479">Metal-binding</keyword>
<keyword id="KW-0547">Nucleotide-binding</keyword>
<keyword id="KW-1185">Reference proteome</keyword>
<keyword id="KW-0808">Transferase</keyword>
<keyword id="KW-0862">Zinc</keyword>
<accession>P0A6F4</accession>
<accession>P08859</accession>
<accession>Q59381</accession>
<evidence type="ECO:0000250" key="1"/>
<evidence type="ECO:0000255" key="2">
    <source>
        <dbReference type="HAMAP-Rule" id="MF_00186"/>
    </source>
</evidence>
<evidence type="ECO:0000305" key="3"/>
<comment type="function">
    <text evidence="2">Key enzyme in the regulation of glycerol uptake and metabolism. Catalyzes the phosphorylation of glycerol to yield sn-glycerol 3-phosphate.</text>
</comment>
<comment type="catalytic activity">
    <reaction evidence="2">
        <text>glycerol + ATP = sn-glycerol 3-phosphate + ADP + H(+)</text>
        <dbReference type="Rhea" id="RHEA:21644"/>
        <dbReference type="ChEBI" id="CHEBI:15378"/>
        <dbReference type="ChEBI" id="CHEBI:17754"/>
        <dbReference type="ChEBI" id="CHEBI:30616"/>
        <dbReference type="ChEBI" id="CHEBI:57597"/>
        <dbReference type="ChEBI" id="CHEBI:456216"/>
        <dbReference type="EC" id="2.7.1.30"/>
    </reaction>
</comment>
<comment type="activity regulation">
    <text evidence="2">Activity of this regulatory enzyme is affected by several metabolites. Allosterically and non-competitively inhibited by fructose 1,6-bisphosphate (FBP) and unphosphorylated phosphocarrier protein EIIA-Glc (III-Glc), an integral component of the bacterial phosphotransferase (PTS) system.</text>
</comment>
<comment type="pathway">
    <text evidence="2">Polyol metabolism; glycerol degradation via glycerol kinase pathway; sn-glycerol 3-phosphate from glycerol: step 1/1.</text>
</comment>
<comment type="subunit">
    <text evidence="2">Homotetramer and homodimer (in equilibrium). Heterodimer with EIIA-Glc. Binds 1 zinc ion per glycerol kinase EIIA-Glc dimer. The zinc ion is important for dimerization.</text>
</comment>
<comment type="similarity">
    <text evidence="2">Belongs to the FGGY kinase family.</text>
</comment>
<comment type="sequence caution" evidence="3">
    <conflict type="erroneous initiation">
        <sequence resource="EMBL-CDS" id="AAG59119"/>
    </conflict>
    <text>Extended N-terminus.</text>
</comment>
<proteinExistence type="inferred from homology"/>
<reference key="1">
    <citation type="journal article" date="2001" name="Nature">
        <title>Genome sequence of enterohaemorrhagic Escherichia coli O157:H7.</title>
        <authorList>
            <person name="Perna N.T."/>
            <person name="Plunkett G. III"/>
            <person name="Burland V."/>
            <person name="Mau B."/>
            <person name="Glasner J.D."/>
            <person name="Rose D.J."/>
            <person name="Mayhew G.F."/>
            <person name="Evans P.S."/>
            <person name="Gregor J."/>
            <person name="Kirkpatrick H.A."/>
            <person name="Posfai G."/>
            <person name="Hackett J."/>
            <person name="Klink S."/>
            <person name="Boutin A."/>
            <person name="Shao Y."/>
            <person name="Miller L."/>
            <person name="Grotbeck E.J."/>
            <person name="Davis N.W."/>
            <person name="Lim A."/>
            <person name="Dimalanta E.T."/>
            <person name="Potamousis K."/>
            <person name="Apodaca J."/>
            <person name="Anantharaman T.S."/>
            <person name="Lin J."/>
            <person name="Yen G."/>
            <person name="Schwartz D.C."/>
            <person name="Welch R.A."/>
            <person name="Blattner F.R."/>
        </authorList>
    </citation>
    <scope>NUCLEOTIDE SEQUENCE [LARGE SCALE GENOMIC DNA]</scope>
    <source>
        <strain>O157:H7 / EDL933 / ATCC 700927 / EHEC</strain>
    </source>
</reference>
<reference key="2">
    <citation type="journal article" date="2001" name="DNA Res.">
        <title>Complete genome sequence of enterohemorrhagic Escherichia coli O157:H7 and genomic comparison with a laboratory strain K-12.</title>
        <authorList>
            <person name="Hayashi T."/>
            <person name="Makino K."/>
            <person name="Ohnishi M."/>
            <person name="Kurokawa K."/>
            <person name="Ishii K."/>
            <person name="Yokoyama K."/>
            <person name="Han C.-G."/>
            <person name="Ohtsubo E."/>
            <person name="Nakayama K."/>
            <person name="Murata T."/>
            <person name="Tanaka M."/>
            <person name="Tobe T."/>
            <person name="Iida T."/>
            <person name="Takami H."/>
            <person name="Honda T."/>
            <person name="Sasakawa C."/>
            <person name="Ogasawara N."/>
            <person name="Yasunaga T."/>
            <person name="Kuhara S."/>
            <person name="Shiba T."/>
            <person name="Hattori M."/>
            <person name="Shinagawa H."/>
        </authorList>
    </citation>
    <scope>NUCLEOTIDE SEQUENCE [LARGE SCALE GENOMIC DNA]</scope>
    <source>
        <strain>O157:H7 / Sakai / RIMD 0509952 / EHEC</strain>
    </source>
</reference>
<dbReference type="EC" id="2.7.1.30" evidence="2"/>
<dbReference type="EMBL" id="AE005174">
    <property type="protein sequence ID" value="AAG59119.1"/>
    <property type="status" value="ALT_INIT"/>
    <property type="molecule type" value="Genomic_DNA"/>
</dbReference>
<dbReference type="EMBL" id="BA000007">
    <property type="protein sequence ID" value="BAB38274.1"/>
    <property type="molecule type" value="Genomic_DNA"/>
</dbReference>
<dbReference type="PIR" id="C91235">
    <property type="entry name" value="C91235"/>
</dbReference>
<dbReference type="RefSeq" id="NP_312878.1">
    <property type="nucleotide sequence ID" value="NC_002695.1"/>
</dbReference>
<dbReference type="RefSeq" id="WP_000136788.1">
    <property type="nucleotide sequence ID" value="NZ_VOAI01000016.1"/>
</dbReference>
<dbReference type="SMR" id="P0A6F4"/>
<dbReference type="MINT" id="P0A6F4"/>
<dbReference type="STRING" id="155864.Z5471"/>
<dbReference type="GeneID" id="75169366"/>
<dbReference type="GeneID" id="915050"/>
<dbReference type="KEGG" id="ece:Z5471"/>
<dbReference type="KEGG" id="ecs:ECs_4851"/>
<dbReference type="PATRIC" id="fig|386585.9.peg.5073"/>
<dbReference type="eggNOG" id="COG0554">
    <property type="taxonomic scope" value="Bacteria"/>
</dbReference>
<dbReference type="HOGENOM" id="CLU_009281_2_3_6"/>
<dbReference type="OMA" id="FMLMNIG"/>
<dbReference type="UniPathway" id="UPA00618">
    <property type="reaction ID" value="UER00672"/>
</dbReference>
<dbReference type="Proteomes" id="UP000000558">
    <property type="component" value="Chromosome"/>
</dbReference>
<dbReference type="Proteomes" id="UP000002519">
    <property type="component" value="Chromosome"/>
</dbReference>
<dbReference type="GO" id="GO:0005829">
    <property type="term" value="C:cytosol"/>
    <property type="evidence" value="ECO:0007669"/>
    <property type="project" value="TreeGrafter"/>
</dbReference>
<dbReference type="GO" id="GO:0005524">
    <property type="term" value="F:ATP binding"/>
    <property type="evidence" value="ECO:0007669"/>
    <property type="project" value="UniProtKB-UniRule"/>
</dbReference>
<dbReference type="GO" id="GO:0004370">
    <property type="term" value="F:glycerol kinase activity"/>
    <property type="evidence" value="ECO:0000250"/>
    <property type="project" value="UniProtKB"/>
</dbReference>
<dbReference type="GO" id="GO:0046872">
    <property type="term" value="F:metal ion binding"/>
    <property type="evidence" value="ECO:0007669"/>
    <property type="project" value="UniProtKB-KW"/>
</dbReference>
<dbReference type="GO" id="GO:0019563">
    <property type="term" value="P:glycerol catabolic process"/>
    <property type="evidence" value="ECO:0007669"/>
    <property type="project" value="UniProtKB-UniRule"/>
</dbReference>
<dbReference type="GO" id="GO:0006071">
    <property type="term" value="P:glycerol metabolic process"/>
    <property type="evidence" value="ECO:0000250"/>
    <property type="project" value="UniProtKB"/>
</dbReference>
<dbReference type="GO" id="GO:0006072">
    <property type="term" value="P:glycerol-3-phosphate metabolic process"/>
    <property type="evidence" value="ECO:0007669"/>
    <property type="project" value="InterPro"/>
</dbReference>
<dbReference type="CDD" id="cd07786">
    <property type="entry name" value="FGGY_EcGK_like"/>
    <property type="match status" value="1"/>
</dbReference>
<dbReference type="FunFam" id="3.30.420.40:FF:000007">
    <property type="entry name" value="Glycerol kinase"/>
    <property type="match status" value="1"/>
</dbReference>
<dbReference type="FunFam" id="3.30.420.40:FF:000008">
    <property type="entry name" value="Glycerol kinase"/>
    <property type="match status" value="1"/>
</dbReference>
<dbReference type="Gene3D" id="3.30.420.40">
    <property type="match status" value="2"/>
</dbReference>
<dbReference type="HAMAP" id="MF_00186">
    <property type="entry name" value="Glycerol_kin"/>
    <property type="match status" value="1"/>
</dbReference>
<dbReference type="InterPro" id="IPR043129">
    <property type="entry name" value="ATPase_NBD"/>
</dbReference>
<dbReference type="InterPro" id="IPR000577">
    <property type="entry name" value="Carb_kinase_FGGY"/>
</dbReference>
<dbReference type="InterPro" id="IPR018483">
    <property type="entry name" value="Carb_kinase_FGGY_CS"/>
</dbReference>
<dbReference type="InterPro" id="IPR018485">
    <property type="entry name" value="FGGY_C"/>
</dbReference>
<dbReference type="InterPro" id="IPR018484">
    <property type="entry name" value="FGGY_N"/>
</dbReference>
<dbReference type="InterPro" id="IPR005999">
    <property type="entry name" value="Glycerol_kin"/>
</dbReference>
<dbReference type="NCBIfam" id="TIGR01311">
    <property type="entry name" value="glycerol_kin"/>
    <property type="match status" value="1"/>
</dbReference>
<dbReference type="NCBIfam" id="NF000756">
    <property type="entry name" value="PRK00047.1"/>
    <property type="match status" value="1"/>
</dbReference>
<dbReference type="PANTHER" id="PTHR10196:SF69">
    <property type="entry name" value="GLYCEROL KINASE"/>
    <property type="match status" value="1"/>
</dbReference>
<dbReference type="PANTHER" id="PTHR10196">
    <property type="entry name" value="SUGAR KINASE"/>
    <property type="match status" value="1"/>
</dbReference>
<dbReference type="Pfam" id="PF02782">
    <property type="entry name" value="FGGY_C"/>
    <property type="match status" value="1"/>
</dbReference>
<dbReference type="Pfam" id="PF00370">
    <property type="entry name" value="FGGY_N"/>
    <property type="match status" value="1"/>
</dbReference>
<dbReference type="PIRSF" id="PIRSF000538">
    <property type="entry name" value="GlpK"/>
    <property type="match status" value="1"/>
</dbReference>
<dbReference type="SUPFAM" id="SSF53067">
    <property type="entry name" value="Actin-like ATPase domain"/>
    <property type="match status" value="2"/>
</dbReference>
<dbReference type="PROSITE" id="PS00933">
    <property type="entry name" value="FGGY_KINASES_1"/>
    <property type="match status" value="1"/>
</dbReference>
<dbReference type="PROSITE" id="PS00445">
    <property type="entry name" value="FGGY_KINASES_2"/>
    <property type="match status" value="1"/>
</dbReference>
<protein>
    <recommendedName>
        <fullName evidence="2">Glycerol kinase</fullName>
        <ecNumber evidence="2">2.7.1.30</ecNumber>
    </recommendedName>
    <alternativeName>
        <fullName evidence="2">ATP:glycerol 3-phosphotransferase</fullName>
    </alternativeName>
    <alternativeName>
        <fullName evidence="2">Glycerokinase</fullName>
        <shortName evidence="2">GK</shortName>
    </alternativeName>
</protein>
<feature type="initiator methionine" description="Removed" evidence="1">
    <location>
        <position position="1"/>
    </location>
</feature>
<feature type="chain" id="PRO_0000059452" description="Glycerol kinase">
    <location>
        <begin position="2"/>
        <end position="502"/>
    </location>
</feature>
<feature type="binding site" evidence="2">
    <location>
        <position position="14"/>
    </location>
    <ligand>
        <name>ADP</name>
        <dbReference type="ChEBI" id="CHEBI:456216"/>
    </ligand>
</feature>
<feature type="binding site" evidence="2">
    <location>
        <position position="14"/>
    </location>
    <ligand>
        <name>ATP</name>
        <dbReference type="ChEBI" id="CHEBI:30616"/>
    </ligand>
</feature>
<feature type="binding site" evidence="2">
    <location>
        <position position="14"/>
    </location>
    <ligand>
        <name>sn-glycerol 3-phosphate</name>
        <dbReference type="ChEBI" id="CHEBI:57597"/>
    </ligand>
</feature>
<feature type="binding site" evidence="2">
    <location>
        <position position="15"/>
    </location>
    <ligand>
        <name>ATP</name>
        <dbReference type="ChEBI" id="CHEBI:30616"/>
    </ligand>
</feature>
<feature type="binding site" evidence="2">
    <location>
        <position position="16"/>
    </location>
    <ligand>
        <name>ATP</name>
        <dbReference type="ChEBI" id="CHEBI:30616"/>
    </ligand>
</feature>
<feature type="binding site" evidence="2">
    <location>
        <position position="18"/>
    </location>
    <ligand>
        <name>ADP</name>
        <dbReference type="ChEBI" id="CHEBI:456216"/>
    </ligand>
</feature>
<feature type="binding site" evidence="2">
    <location>
        <position position="84"/>
    </location>
    <ligand>
        <name>glycerol</name>
        <dbReference type="ChEBI" id="CHEBI:17754"/>
    </ligand>
</feature>
<feature type="binding site" evidence="2">
    <location>
        <position position="84"/>
    </location>
    <ligand>
        <name>sn-glycerol 3-phosphate</name>
        <dbReference type="ChEBI" id="CHEBI:57597"/>
    </ligand>
</feature>
<feature type="binding site" evidence="2">
    <location>
        <position position="85"/>
    </location>
    <ligand>
        <name>glycerol</name>
        <dbReference type="ChEBI" id="CHEBI:17754"/>
    </ligand>
</feature>
<feature type="binding site" evidence="2">
    <location>
        <position position="85"/>
    </location>
    <ligand>
        <name>sn-glycerol 3-phosphate</name>
        <dbReference type="ChEBI" id="CHEBI:57597"/>
    </ligand>
</feature>
<feature type="binding site" evidence="2">
    <location>
        <position position="136"/>
    </location>
    <ligand>
        <name>glycerol</name>
        <dbReference type="ChEBI" id="CHEBI:17754"/>
    </ligand>
</feature>
<feature type="binding site" evidence="2">
    <location>
        <position position="136"/>
    </location>
    <ligand>
        <name>sn-glycerol 3-phosphate</name>
        <dbReference type="ChEBI" id="CHEBI:57597"/>
    </ligand>
</feature>
<feature type="binding site" evidence="2">
    <location>
        <position position="246"/>
    </location>
    <ligand>
        <name>glycerol</name>
        <dbReference type="ChEBI" id="CHEBI:17754"/>
    </ligand>
</feature>
<feature type="binding site" evidence="2">
    <location>
        <position position="246"/>
    </location>
    <ligand>
        <name>sn-glycerol 3-phosphate</name>
        <dbReference type="ChEBI" id="CHEBI:57597"/>
    </ligand>
</feature>
<feature type="binding site" evidence="2">
    <location>
        <position position="247"/>
    </location>
    <ligand>
        <name>glycerol</name>
        <dbReference type="ChEBI" id="CHEBI:17754"/>
    </ligand>
</feature>
<feature type="binding site" evidence="2">
    <location>
        <position position="268"/>
    </location>
    <ligand>
        <name>ADP</name>
        <dbReference type="ChEBI" id="CHEBI:456216"/>
    </ligand>
</feature>
<feature type="binding site" evidence="2">
    <location>
        <position position="268"/>
    </location>
    <ligand>
        <name>ATP</name>
        <dbReference type="ChEBI" id="CHEBI:30616"/>
    </ligand>
</feature>
<feature type="binding site" evidence="2">
    <location>
        <position position="311"/>
    </location>
    <ligand>
        <name>ADP</name>
        <dbReference type="ChEBI" id="CHEBI:456216"/>
    </ligand>
</feature>
<feature type="binding site" evidence="2">
    <location>
        <position position="311"/>
    </location>
    <ligand>
        <name>ATP</name>
        <dbReference type="ChEBI" id="CHEBI:30616"/>
    </ligand>
</feature>
<feature type="binding site" evidence="2">
    <location>
        <position position="315"/>
    </location>
    <ligand>
        <name>ATP</name>
        <dbReference type="ChEBI" id="CHEBI:30616"/>
    </ligand>
</feature>
<feature type="binding site" evidence="2">
    <location>
        <position position="412"/>
    </location>
    <ligand>
        <name>ADP</name>
        <dbReference type="ChEBI" id="CHEBI:456216"/>
    </ligand>
</feature>
<feature type="binding site" evidence="2">
    <location>
        <position position="412"/>
    </location>
    <ligand>
        <name>ATP</name>
        <dbReference type="ChEBI" id="CHEBI:30616"/>
    </ligand>
</feature>
<feature type="binding site" evidence="2">
    <location>
        <position position="416"/>
    </location>
    <ligand>
        <name>ADP</name>
        <dbReference type="ChEBI" id="CHEBI:456216"/>
    </ligand>
</feature>
<name>GLPK_ECO57</name>
<organism>
    <name type="scientific">Escherichia coli O157:H7</name>
    <dbReference type="NCBI Taxonomy" id="83334"/>
    <lineage>
        <taxon>Bacteria</taxon>
        <taxon>Pseudomonadati</taxon>
        <taxon>Pseudomonadota</taxon>
        <taxon>Gammaproteobacteria</taxon>
        <taxon>Enterobacterales</taxon>
        <taxon>Enterobacteriaceae</taxon>
        <taxon>Escherichia</taxon>
    </lineage>
</organism>
<gene>
    <name evidence="2" type="primary">glpK</name>
    <name type="ordered locus">Z5471</name>
    <name type="ordered locus">ECs4851</name>
</gene>